<evidence type="ECO:0000269" key="1">
    <source>
    </source>
</evidence>
<evidence type="ECO:0000303" key="2">
    <source>
    </source>
</evidence>
<evidence type="ECO:0000305" key="3"/>
<evidence type="ECO:0000312" key="4">
    <source>
        <dbReference type="EMBL" id="ABG96438.1"/>
    </source>
</evidence>
<protein>
    <recommendedName>
        <fullName evidence="3">(7aS)-7a-methyl-1,5-dioxo-2,3,5,6,7,7a-hexahydro-1H-indene-carboxyl-CoA hydrolase</fullName>
        <shortName evidence="3">HIEC-CoA hydrolase</shortName>
        <ecNumber evidence="1">4.1.99.-</ecNumber>
    </recommendedName>
</protein>
<keyword id="KW-0153">Cholesterol metabolism</keyword>
<keyword id="KW-0443">Lipid metabolism</keyword>
<keyword id="KW-0456">Lyase</keyword>
<keyword id="KW-0753">Steroid metabolism</keyword>
<keyword id="KW-1207">Sterol metabolism</keyword>
<reference key="1">
    <citation type="journal article" date="2006" name="Proc. Natl. Acad. Sci. U.S.A.">
        <title>The complete genome of Rhodococcus sp. RHA1 provides insights into a catabolic powerhouse.</title>
        <authorList>
            <person name="McLeod M.P."/>
            <person name="Warren R.L."/>
            <person name="Hsiao W.W.L."/>
            <person name="Araki N."/>
            <person name="Myhre M."/>
            <person name="Fernandes C."/>
            <person name="Miyazawa D."/>
            <person name="Wong W."/>
            <person name="Lillquist A.L."/>
            <person name="Wang D."/>
            <person name="Dosanjh M."/>
            <person name="Hara H."/>
            <person name="Petrescu A."/>
            <person name="Morin R.D."/>
            <person name="Yang G."/>
            <person name="Stott J.M."/>
            <person name="Schein J.E."/>
            <person name="Shin H."/>
            <person name="Smailus D."/>
            <person name="Siddiqui A.S."/>
            <person name="Marra M.A."/>
            <person name="Jones S.J.M."/>
            <person name="Holt R."/>
            <person name="Brinkman F.S.L."/>
            <person name="Miyauchi K."/>
            <person name="Fukuda M."/>
            <person name="Davies J.E."/>
            <person name="Mohn W.W."/>
            <person name="Eltis L.D."/>
        </authorList>
    </citation>
    <scope>NUCLEOTIDE SEQUENCE [LARGE SCALE GENOMIC DNA]</scope>
    <source>
        <strain>RHA1</strain>
    </source>
</reference>
<reference key="2">
    <citation type="journal article" date="2017" name="MBio">
        <title>Catabolism of the last two steroid rings in Mycobacterium tuberculosis and other bacteria.</title>
        <authorList>
            <person name="Crowe A.M."/>
            <person name="Casabon I."/>
            <person name="Brown K.L."/>
            <person name="Liu J."/>
            <person name="Lian J."/>
            <person name="Rogalski J.C."/>
            <person name="Hurst T.E."/>
            <person name="Snieckus V."/>
            <person name="Foster L.J."/>
            <person name="Eltis L.D."/>
        </authorList>
    </citation>
    <scope>FUNCTION</scope>
    <scope>CATALYTIC ACTIVITY</scope>
    <scope>PATHWAY</scope>
    <source>
        <strain>RHA1</strain>
    </source>
</reference>
<feature type="chain" id="PRO_0000452311" description="(7aS)-7a-methyl-1,5-dioxo-2,3,5,6,7,7a-hexahydro-1H-indene-carboxyl-CoA hydrolase">
    <location>
        <begin position="1"/>
        <end position="258"/>
    </location>
</feature>
<dbReference type="EC" id="4.1.99.-" evidence="1"/>
<dbReference type="EMBL" id="CP000431">
    <property type="protein sequence ID" value="ABG96438.1"/>
    <property type="molecule type" value="Genomic_DNA"/>
</dbReference>
<dbReference type="RefSeq" id="WP_007300903.1">
    <property type="nucleotide sequence ID" value="NC_008268.1"/>
</dbReference>
<dbReference type="SMR" id="Q0S7P8"/>
<dbReference type="KEGG" id="rha:RHA1_ro04652"/>
<dbReference type="PATRIC" id="fig|101510.16.peg.4695"/>
<dbReference type="eggNOG" id="COG1024">
    <property type="taxonomic scope" value="Bacteria"/>
</dbReference>
<dbReference type="HOGENOM" id="CLU_009834_7_6_11"/>
<dbReference type="OrthoDB" id="2988772at2"/>
<dbReference type="UniPathway" id="UPA01058"/>
<dbReference type="Proteomes" id="UP000008710">
    <property type="component" value="Chromosome"/>
</dbReference>
<dbReference type="GO" id="GO:0016829">
    <property type="term" value="F:lyase activity"/>
    <property type="evidence" value="ECO:0007669"/>
    <property type="project" value="UniProtKB-KW"/>
</dbReference>
<dbReference type="GO" id="GO:0006707">
    <property type="term" value="P:cholesterol catabolic process"/>
    <property type="evidence" value="ECO:0007669"/>
    <property type="project" value="UniProtKB-UniPathway"/>
</dbReference>
<dbReference type="GO" id="GO:0006635">
    <property type="term" value="P:fatty acid beta-oxidation"/>
    <property type="evidence" value="ECO:0007669"/>
    <property type="project" value="TreeGrafter"/>
</dbReference>
<dbReference type="CDD" id="cd06558">
    <property type="entry name" value="crotonase-like"/>
    <property type="match status" value="1"/>
</dbReference>
<dbReference type="Gene3D" id="3.90.226.10">
    <property type="entry name" value="2-enoyl-CoA Hydratase, Chain A, domain 1"/>
    <property type="match status" value="1"/>
</dbReference>
<dbReference type="InterPro" id="IPR029045">
    <property type="entry name" value="ClpP/crotonase-like_dom_sf"/>
</dbReference>
<dbReference type="InterPro" id="IPR001753">
    <property type="entry name" value="Enoyl-CoA_hydra/iso"/>
</dbReference>
<dbReference type="NCBIfam" id="NF005925">
    <property type="entry name" value="PRK07938.1"/>
    <property type="match status" value="1"/>
</dbReference>
<dbReference type="PANTHER" id="PTHR11941:SF169">
    <property type="entry name" value="(7AS)-7A-METHYL-1,5-DIOXO-2,3,5,6,7,7A-HEXAHYDRO-1H-INDENE-CARBOXYL-COA HYDROLASE"/>
    <property type="match status" value="1"/>
</dbReference>
<dbReference type="PANTHER" id="PTHR11941">
    <property type="entry name" value="ENOYL-COA HYDRATASE-RELATED"/>
    <property type="match status" value="1"/>
</dbReference>
<dbReference type="Pfam" id="PF00378">
    <property type="entry name" value="ECH_1"/>
    <property type="match status" value="1"/>
</dbReference>
<dbReference type="SUPFAM" id="SSF52096">
    <property type="entry name" value="ClpP/crotonase"/>
    <property type="match status" value="1"/>
</dbReference>
<proteinExistence type="evidence at protein level"/>
<comment type="function">
    <text evidence="1">Involved in the final steps of cholesterol and steroid degradation (PubMed:28377529). Catalyzes the hydrolytic ring D opening of (7aS)-7a-methyl-1,5-dioxo-2,3,5,6,7,7a-hexahydro-1H-indene-carboxyl-CoA (HIEC-CoA) to (3E)-2-(2-carboxylatoethyl)-3-methyl-6-oxocyclohex-1-ene-1-carboxyl-CoA (COCHEA-CoA) (PubMed:28377529).</text>
</comment>
<comment type="catalytic activity">
    <reaction evidence="1">
        <text>(7aS)-7a-methyl-1,5-dioxo-2,3,5,6,7,7a-hexahydro-1H-indene-carboxyl-CoA + H2O = (3E)-2-(2-carboxylatoethyl)-3-methyl-6-oxocyclohex-1-ene-1-carboxyl-CoA + H(+)</text>
        <dbReference type="Rhea" id="RHEA:66360"/>
        <dbReference type="ChEBI" id="CHEBI:15377"/>
        <dbReference type="ChEBI" id="CHEBI:15378"/>
        <dbReference type="ChEBI" id="CHEBI:167100"/>
        <dbReference type="ChEBI" id="CHEBI:167101"/>
    </reaction>
    <physiologicalReaction direction="left-to-right" evidence="1">
        <dbReference type="Rhea" id="RHEA:66361"/>
    </physiologicalReaction>
</comment>
<comment type="pathway">
    <text evidence="1">Steroid metabolism; cholesterol degradation.</text>
</comment>
<comment type="similarity">
    <text evidence="3">Belongs to the enoyl-CoA hydratase/isomerase family.</text>
</comment>
<name>ECH20_RHOJR</name>
<accession>Q0S7P8</accession>
<gene>
    <name evidence="2" type="primary">echA20</name>
    <name evidence="4" type="ordered locus">RHA1_ro04652</name>
</gene>
<organism>
    <name type="scientific">Rhodococcus jostii (strain RHA1)</name>
    <dbReference type="NCBI Taxonomy" id="101510"/>
    <lineage>
        <taxon>Bacteria</taxon>
        <taxon>Bacillati</taxon>
        <taxon>Actinomycetota</taxon>
        <taxon>Actinomycetes</taxon>
        <taxon>Mycobacteriales</taxon>
        <taxon>Nocardiaceae</taxon>
        <taxon>Rhodococcus</taxon>
    </lineage>
</organism>
<sequence>MGITSTTDGDGITTVTVDYPPVNAIPSRGWFELADAVLDAGRNPDTHVVILRAEGRGFNAGVDIKEMQATDGYGALVDANRGCAAAFAAVYDCAVPVVVAVNGFCVGGGIGLVGNADVIVASDDAVFGLPEVDRGALGAATHLARLVPQHMMRTLYYTAQNVTAQQLQHFGSVYEVVPREKLDDTARDIAAKIAAKDTRVIRCAKEAINGIDPVDVKTSYRLEQGYTFELNLAGVSDEHRDEFVETGKPRSHSNNRKG</sequence>